<dbReference type="EC" id="2.1.2.1" evidence="1"/>
<dbReference type="EMBL" id="CP000151">
    <property type="protein sequence ID" value="ABB07494.1"/>
    <property type="molecule type" value="Genomic_DNA"/>
</dbReference>
<dbReference type="RefSeq" id="WP_011351079.1">
    <property type="nucleotide sequence ID" value="NC_007510.1"/>
</dbReference>
<dbReference type="SMR" id="Q39J72"/>
<dbReference type="GeneID" id="45093800"/>
<dbReference type="KEGG" id="bur:Bcep18194_A3895"/>
<dbReference type="PATRIC" id="fig|482957.22.peg.766"/>
<dbReference type="HOGENOM" id="CLU_022477_2_1_4"/>
<dbReference type="UniPathway" id="UPA00193"/>
<dbReference type="UniPathway" id="UPA00288">
    <property type="reaction ID" value="UER01023"/>
</dbReference>
<dbReference type="Proteomes" id="UP000002705">
    <property type="component" value="Chromosome 1"/>
</dbReference>
<dbReference type="GO" id="GO:0005829">
    <property type="term" value="C:cytosol"/>
    <property type="evidence" value="ECO:0007669"/>
    <property type="project" value="TreeGrafter"/>
</dbReference>
<dbReference type="GO" id="GO:0004372">
    <property type="term" value="F:glycine hydroxymethyltransferase activity"/>
    <property type="evidence" value="ECO:0007669"/>
    <property type="project" value="UniProtKB-UniRule"/>
</dbReference>
<dbReference type="GO" id="GO:0030170">
    <property type="term" value="F:pyridoxal phosphate binding"/>
    <property type="evidence" value="ECO:0007669"/>
    <property type="project" value="UniProtKB-UniRule"/>
</dbReference>
<dbReference type="GO" id="GO:0019264">
    <property type="term" value="P:glycine biosynthetic process from serine"/>
    <property type="evidence" value="ECO:0007669"/>
    <property type="project" value="UniProtKB-UniRule"/>
</dbReference>
<dbReference type="GO" id="GO:0035999">
    <property type="term" value="P:tetrahydrofolate interconversion"/>
    <property type="evidence" value="ECO:0007669"/>
    <property type="project" value="UniProtKB-UniRule"/>
</dbReference>
<dbReference type="CDD" id="cd00378">
    <property type="entry name" value="SHMT"/>
    <property type="match status" value="1"/>
</dbReference>
<dbReference type="FunFam" id="3.40.640.10:FF:000001">
    <property type="entry name" value="Serine hydroxymethyltransferase"/>
    <property type="match status" value="1"/>
</dbReference>
<dbReference type="FunFam" id="3.90.1150.10:FF:000003">
    <property type="entry name" value="Serine hydroxymethyltransferase"/>
    <property type="match status" value="1"/>
</dbReference>
<dbReference type="Gene3D" id="3.90.1150.10">
    <property type="entry name" value="Aspartate Aminotransferase, domain 1"/>
    <property type="match status" value="1"/>
</dbReference>
<dbReference type="Gene3D" id="3.40.640.10">
    <property type="entry name" value="Type I PLP-dependent aspartate aminotransferase-like (Major domain)"/>
    <property type="match status" value="1"/>
</dbReference>
<dbReference type="HAMAP" id="MF_00051">
    <property type="entry name" value="SHMT"/>
    <property type="match status" value="1"/>
</dbReference>
<dbReference type="InterPro" id="IPR015424">
    <property type="entry name" value="PyrdxlP-dep_Trfase"/>
</dbReference>
<dbReference type="InterPro" id="IPR015421">
    <property type="entry name" value="PyrdxlP-dep_Trfase_major"/>
</dbReference>
<dbReference type="InterPro" id="IPR015422">
    <property type="entry name" value="PyrdxlP-dep_Trfase_small"/>
</dbReference>
<dbReference type="InterPro" id="IPR001085">
    <property type="entry name" value="Ser_HO-MeTrfase"/>
</dbReference>
<dbReference type="InterPro" id="IPR049943">
    <property type="entry name" value="Ser_HO-MeTrfase-like"/>
</dbReference>
<dbReference type="InterPro" id="IPR019798">
    <property type="entry name" value="Ser_HO-MeTrfase_PLP_BS"/>
</dbReference>
<dbReference type="InterPro" id="IPR039429">
    <property type="entry name" value="SHMT-like_dom"/>
</dbReference>
<dbReference type="NCBIfam" id="NF000586">
    <property type="entry name" value="PRK00011.1"/>
    <property type="match status" value="1"/>
</dbReference>
<dbReference type="PANTHER" id="PTHR11680">
    <property type="entry name" value="SERINE HYDROXYMETHYLTRANSFERASE"/>
    <property type="match status" value="1"/>
</dbReference>
<dbReference type="PANTHER" id="PTHR11680:SF50">
    <property type="entry name" value="SERINE HYDROXYMETHYLTRANSFERASE"/>
    <property type="match status" value="1"/>
</dbReference>
<dbReference type="Pfam" id="PF00464">
    <property type="entry name" value="SHMT"/>
    <property type="match status" value="1"/>
</dbReference>
<dbReference type="PIRSF" id="PIRSF000412">
    <property type="entry name" value="SHMT"/>
    <property type="match status" value="1"/>
</dbReference>
<dbReference type="SUPFAM" id="SSF53383">
    <property type="entry name" value="PLP-dependent transferases"/>
    <property type="match status" value="1"/>
</dbReference>
<dbReference type="PROSITE" id="PS00096">
    <property type="entry name" value="SHMT"/>
    <property type="match status" value="1"/>
</dbReference>
<evidence type="ECO:0000255" key="1">
    <source>
        <dbReference type="HAMAP-Rule" id="MF_00051"/>
    </source>
</evidence>
<reference key="1">
    <citation type="submission" date="2005-10" db="EMBL/GenBank/DDBJ databases">
        <title>Complete sequence of chromosome 1 of Burkholderia sp. 383.</title>
        <authorList>
            <consortium name="US DOE Joint Genome Institute"/>
            <person name="Copeland A."/>
            <person name="Lucas S."/>
            <person name="Lapidus A."/>
            <person name="Barry K."/>
            <person name="Detter J.C."/>
            <person name="Glavina T."/>
            <person name="Hammon N."/>
            <person name="Israni S."/>
            <person name="Pitluck S."/>
            <person name="Chain P."/>
            <person name="Malfatti S."/>
            <person name="Shin M."/>
            <person name="Vergez L."/>
            <person name="Schmutz J."/>
            <person name="Larimer F."/>
            <person name="Land M."/>
            <person name="Kyrpides N."/>
            <person name="Lykidis A."/>
            <person name="Richardson P."/>
        </authorList>
    </citation>
    <scope>NUCLEOTIDE SEQUENCE [LARGE SCALE GENOMIC DNA]</scope>
    <source>
        <strain>ATCC 17760 / DSM 23089 / LMG 22485 / NCIMB 9086 / R18194 / 383</strain>
    </source>
</reference>
<gene>
    <name evidence="1" type="primary">glyA3</name>
    <name type="ordered locus">Bcep18194_A3895</name>
</gene>
<sequence length="415" mass="44842">MFDRAQSTIANVDPEIFAAIEQENRRQEDHIELIASENYTSPAVMAAQGSQLTNKYAEGYPGKRYYGGCEYVDVVEQLAIDRVKQLFGAEAANVQPNSGSQANQGVFFAMLKPGDTIMGMSLAHGGHLTHGSPVNMSGKWFNVVSYGLNENEDIDYEAAEQLAQEHKPKLIVAGASAFSLKIDFERLAKIAKSVGAYLMVDMAHYAGLIAAGVYPNPVPHADFVTTTTHKSLRGPRGGVILMKAEYEKPINSAIFPGIQGGPLMHVIAGKAVAFKEALSPEFKAYQEKVVENARVLAETLVKRGLRIVSGRTESHVMLVDLRAKHITGKAAEAALGAAHITVNKNAIPNDPEKPFVTSGVRLGSPAMTTRGFGPAEAEQVGNLIADVLDNPEDAATIERVRAQVAELTKRFPVYR</sequence>
<feature type="chain" id="PRO_0000234959" description="Serine hydroxymethyltransferase 3">
    <location>
        <begin position="1"/>
        <end position="415"/>
    </location>
</feature>
<feature type="binding site" evidence="1">
    <location>
        <position position="122"/>
    </location>
    <ligand>
        <name>(6S)-5,6,7,8-tetrahydrofolate</name>
        <dbReference type="ChEBI" id="CHEBI:57453"/>
    </ligand>
</feature>
<feature type="binding site" evidence="1">
    <location>
        <begin position="126"/>
        <end position="128"/>
    </location>
    <ligand>
        <name>(6S)-5,6,7,8-tetrahydrofolate</name>
        <dbReference type="ChEBI" id="CHEBI:57453"/>
    </ligand>
</feature>
<feature type="site" description="Plays an important role in substrate specificity" evidence="1">
    <location>
        <position position="229"/>
    </location>
</feature>
<feature type="modified residue" description="N6-(pyridoxal phosphate)lysine" evidence="1">
    <location>
        <position position="230"/>
    </location>
</feature>
<comment type="function">
    <text evidence="1">Catalyzes the reversible interconversion of serine and glycine with tetrahydrofolate (THF) serving as the one-carbon carrier. This reaction serves as the major source of one-carbon groups required for the biosynthesis of purines, thymidylate, methionine, and other important biomolecules. Also exhibits THF-independent aldolase activity toward beta-hydroxyamino acids, producing glycine and aldehydes, via a retro-aldol mechanism.</text>
</comment>
<comment type="catalytic activity">
    <reaction evidence="1">
        <text>(6R)-5,10-methylene-5,6,7,8-tetrahydrofolate + glycine + H2O = (6S)-5,6,7,8-tetrahydrofolate + L-serine</text>
        <dbReference type="Rhea" id="RHEA:15481"/>
        <dbReference type="ChEBI" id="CHEBI:15377"/>
        <dbReference type="ChEBI" id="CHEBI:15636"/>
        <dbReference type="ChEBI" id="CHEBI:33384"/>
        <dbReference type="ChEBI" id="CHEBI:57305"/>
        <dbReference type="ChEBI" id="CHEBI:57453"/>
        <dbReference type="EC" id="2.1.2.1"/>
    </reaction>
</comment>
<comment type="cofactor">
    <cofactor evidence="1">
        <name>pyridoxal 5'-phosphate</name>
        <dbReference type="ChEBI" id="CHEBI:597326"/>
    </cofactor>
</comment>
<comment type="pathway">
    <text evidence="1">One-carbon metabolism; tetrahydrofolate interconversion.</text>
</comment>
<comment type="pathway">
    <text evidence="1">Amino-acid biosynthesis; glycine biosynthesis; glycine from L-serine: step 1/1.</text>
</comment>
<comment type="subunit">
    <text evidence="1">Homodimer.</text>
</comment>
<comment type="subcellular location">
    <subcellularLocation>
        <location evidence="1">Cytoplasm</location>
    </subcellularLocation>
</comment>
<comment type="similarity">
    <text evidence="1">Belongs to the SHMT family.</text>
</comment>
<accession>Q39J72</accession>
<proteinExistence type="inferred from homology"/>
<keyword id="KW-0028">Amino-acid biosynthesis</keyword>
<keyword id="KW-0963">Cytoplasm</keyword>
<keyword id="KW-0554">One-carbon metabolism</keyword>
<keyword id="KW-0663">Pyridoxal phosphate</keyword>
<keyword id="KW-0808">Transferase</keyword>
<name>GLYA3_BURL3</name>
<protein>
    <recommendedName>
        <fullName evidence="1">Serine hydroxymethyltransferase 3</fullName>
        <shortName evidence="1">SHMT 3</shortName>
        <shortName evidence="1">Serine methylase 3</shortName>
        <ecNumber evidence="1">2.1.2.1</ecNumber>
    </recommendedName>
</protein>
<organism>
    <name type="scientific">Burkholderia lata (strain ATCC 17760 / DSM 23089 / LMG 22485 / NCIMB 9086 / R18194 / 383)</name>
    <dbReference type="NCBI Taxonomy" id="482957"/>
    <lineage>
        <taxon>Bacteria</taxon>
        <taxon>Pseudomonadati</taxon>
        <taxon>Pseudomonadota</taxon>
        <taxon>Betaproteobacteria</taxon>
        <taxon>Burkholderiales</taxon>
        <taxon>Burkholderiaceae</taxon>
        <taxon>Burkholderia</taxon>
        <taxon>Burkholderia cepacia complex</taxon>
    </lineage>
</organism>